<gene>
    <name type="primary">31</name>
</gene>
<sequence length="617" mass="65661">MTFPTNPLEAIGADGAFEIGGGDFSFGQDYTEQIIRSLFTMPPVRLDNAITLLREHLLKLPLEALQRFKEMIPDWAEGAFDTATGAVDAIMDALSEGPLFLKLAEFQVFLQRLLTEPGEVIGEIPQALVNGLTSALETVNNTIQTIVDMLLQALGINPKGDLLDRIFDLSDEIEWLRDTASQVASGLQQTWNHFWSALTGRSPGEDQTVVEPAEQIGELAGTTQSNSSAIAELQARLDAQDHTGIAGGDDFERVNTTAVGPGWAEFYTGGGYGSGRGYYAIKDGHQAEWTDQGATQNTARFVRTDPADEKTVTDYQKMTLVVGTIPGEAAGLFRGGSHIRLWLRVNDNAPTVGITDGVYVEVGGANLAQLGYRRRGSDHFVGSAFNCSWGAGTIFTLVAGTVDGIEKVEFYKNGSRLALWSDDGLRSAIGAGFRRWGWEGQARNRNLGQGTPSSVTRVTINDNDPSGLGGGSVHLETGVVGILQIPNGGTGATSAAEARANLGAEAAIPAGTVAQYWRGDKTWQPLNKVAVGLHLVDNTSDAQKMSAPAVLTNKTISGADNTLTDIPVAALGLGAVNAVRVIAGVPIPNSVTIWIGTEAQFQALPTKDANTLYFRTA</sequence>
<name>VG31_BPMD2</name>
<protein>
    <recommendedName>
        <fullName>Gene 31 protein</fullName>
    </recommendedName>
    <alternativeName>
        <fullName>Gp31</fullName>
    </alternativeName>
</protein>
<accession>O64225</accession>
<proteinExistence type="predicted"/>
<organismHost>
    <name type="scientific">Mycobacterium</name>
    <dbReference type="NCBI Taxonomy" id="1763"/>
</organismHost>
<reference key="1">
    <citation type="journal article" date="1998" name="J. Mol. Biol.">
        <title>Genome structure of mycobacteriophage D29: implications for phage evolution.</title>
        <authorList>
            <person name="Ford M.E."/>
            <person name="Sarkis G.J."/>
            <person name="Belanger A.E."/>
            <person name="Hendrix R.W."/>
            <person name="Hatfull G.F."/>
        </authorList>
    </citation>
    <scope>NUCLEOTIDE SEQUENCE [LARGE SCALE GENOMIC DNA]</scope>
</reference>
<keyword id="KW-1185">Reference proteome</keyword>
<organism>
    <name type="scientific">Mycobacterium phage D29</name>
    <name type="common">Mycobacteriophage D29</name>
    <dbReference type="NCBI Taxonomy" id="28369"/>
    <lineage>
        <taxon>Viruses</taxon>
        <taxon>Duplodnaviria</taxon>
        <taxon>Heunggongvirae</taxon>
        <taxon>Uroviricota</taxon>
        <taxon>Caudoviricetes</taxon>
        <taxon>Fromanvirus</taxon>
    </lineage>
</organism>
<dbReference type="EMBL" id="AF022214">
    <property type="protein sequence ID" value="AAC18472.1"/>
    <property type="molecule type" value="Genomic_DNA"/>
</dbReference>
<dbReference type="PIR" id="E72803">
    <property type="entry name" value="E72803"/>
</dbReference>
<dbReference type="RefSeq" id="NP_046847.1">
    <property type="nucleotide sequence ID" value="NC_001900.1"/>
</dbReference>
<dbReference type="GeneID" id="1261612"/>
<dbReference type="KEGG" id="vg:1261612"/>
<dbReference type="OrthoDB" id="2324at10239"/>
<dbReference type="Proteomes" id="UP000002131">
    <property type="component" value="Segment"/>
</dbReference>
<dbReference type="InterPro" id="IPR055681">
    <property type="entry name" value="DUF7257"/>
</dbReference>
<dbReference type="InterPro" id="IPR056923">
    <property type="entry name" value="Minor_tail_gp31_C"/>
</dbReference>
<dbReference type="Pfam" id="PF23918">
    <property type="entry name" value="DUF7257"/>
    <property type="match status" value="1"/>
</dbReference>
<dbReference type="Pfam" id="PF24243">
    <property type="entry name" value="Phage_tail_C"/>
    <property type="match status" value="1"/>
</dbReference>
<feature type="chain" id="PRO_0000164750" description="Gene 31 protein">
    <location>
        <begin position="1"/>
        <end position="617"/>
    </location>
</feature>